<keyword id="KW-0539">Nucleus</keyword>
<keyword id="KW-0597">Phosphoprotein</keyword>
<keyword id="KW-1185">Reference proteome</keyword>
<keyword id="KW-0943">RNA-mediated gene silencing</keyword>
<gene>
    <name type="primary">Ars2</name>
    <name type="ORF">GA20626</name>
</gene>
<proteinExistence type="inferred from homology"/>
<comment type="function">
    <text evidence="1">Acts as a mediator between the cap-binding complex (CBC) and RNA-mediated gene silencing (RNAi). Involved in innate immunity via the short interfering RNAs (siRNAs) processing machinery by restricting the viral RNA production. Also involved microRNA (miRNA)-mediated silencing by contributing to the stability and delivery of primary miRNA transcripts to the primary miRNA processing complex containing drosha and pasha (By similarity).</text>
</comment>
<comment type="subunit">
    <text evidence="1">Interacts with cbp20, Dcr-2 and pasha.</text>
</comment>
<comment type="subcellular location">
    <subcellularLocation>
        <location evidence="1">Nucleus</location>
    </subcellularLocation>
</comment>
<comment type="similarity">
    <text evidence="3">Belongs to the ARS2 family.</text>
</comment>
<feature type="chain" id="PRO_0000385221" description="Serrate RNA effector molecule homolog">
    <location>
        <begin position="1"/>
        <end position="951"/>
    </location>
</feature>
<feature type="region of interest" description="Disordered" evidence="2">
    <location>
        <begin position="1"/>
        <end position="108"/>
    </location>
</feature>
<feature type="region of interest" description="Disordered" evidence="2">
    <location>
        <begin position="283"/>
        <end position="504"/>
    </location>
</feature>
<feature type="region of interest" description="Disordered" evidence="2">
    <location>
        <begin position="644"/>
        <end position="664"/>
    </location>
</feature>
<feature type="region of interest" description="Disordered" evidence="2">
    <location>
        <begin position="864"/>
        <end position="893"/>
    </location>
</feature>
<feature type="compositionally biased region" description="Basic and acidic residues" evidence="2">
    <location>
        <begin position="8"/>
        <end position="33"/>
    </location>
</feature>
<feature type="compositionally biased region" description="Basic and acidic residues" evidence="2">
    <location>
        <begin position="40"/>
        <end position="49"/>
    </location>
</feature>
<feature type="compositionally biased region" description="Gly residues" evidence="2">
    <location>
        <begin position="51"/>
        <end position="60"/>
    </location>
</feature>
<feature type="compositionally biased region" description="Basic and acidic residues" evidence="2">
    <location>
        <begin position="92"/>
        <end position="103"/>
    </location>
</feature>
<feature type="compositionally biased region" description="Acidic residues" evidence="2">
    <location>
        <begin position="328"/>
        <end position="340"/>
    </location>
</feature>
<feature type="compositionally biased region" description="Basic and acidic residues" evidence="2">
    <location>
        <begin position="341"/>
        <end position="362"/>
    </location>
</feature>
<feature type="compositionally biased region" description="Basic residues" evidence="2">
    <location>
        <begin position="363"/>
        <end position="378"/>
    </location>
</feature>
<feature type="compositionally biased region" description="Low complexity" evidence="2">
    <location>
        <begin position="387"/>
        <end position="396"/>
    </location>
</feature>
<feature type="compositionally biased region" description="Basic and acidic residues" evidence="2">
    <location>
        <begin position="405"/>
        <end position="434"/>
    </location>
</feature>
<feature type="compositionally biased region" description="Basic and acidic residues" evidence="2">
    <location>
        <begin position="442"/>
        <end position="487"/>
    </location>
</feature>
<feature type="compositionally biased region" description="Polar residues" evidence="2">
    <location>
        <begin position="649"/>
        <end position="664"/>
    </location>
</feature>
<feature type="modified residue" description="Phosphotyrosine" evidence="1">
    <location>
        <position position="79"/>
    </location>
</feature>
<feature type="modified residue" description="Phosphoserine" evidence="1">
    <location>
        <position position="81"/>
    </location>
</feature>
<feature type="modified residue" description="Phosphothreonine" evidence="1">
    <location>
        <position position="299"/>
    </location>
</feature>
<feature type="modified residue" description="Phosphoserine" evidence="1">
    <location>
        <position position="302"/>
    </location>
</feature>
<feature type="modified residue" description="Phosphoserine" evidence="1">
    <location>
        <position position="328"/>
    </location>
</feature>
<feature type="modified residue" description="Phosphoserine" evidence="1">
    <location>
        <position position="354"/>
    </location>
</feature>
<feature type="modified residue" description="Phosphoserine" evidence="1">
    <location>
        <position position="441"/>
    </location>
</feature>
<reference key="1">
    <citation type="journal article" date="2005" name="Genome Res.">
        <title>Comparative genome sequencing of Drosophila pseudoobscura: chromosomal, gene, and cis-element evolution.</title>
        <authorList>
            <person name="Richards S."/>
            <person name="Liu Y."/>
            <person name="Bettencourt B.R."/>
            <person name="Hradecky P."/>
            <person name="Letovsky S."/>
            <person name="Nielsen R."/>
            <person name="Thornton K."/>
            <person name="Hubisz M.J."/>
            <person name="Chen R."/>
            <person name="Meisel R.P."/>
            <person name="Couronne O."/>
            <person name="Hua S."/>
            <person name="Smith M.A."/>
            <person name="Zhang P."/>
            <person name="Liu J."/>
            <person name="Bussemaker H.J."/>
            <person name="van Batenburg M.F."/>
            <person name="Howells S.L."/>
            <person name="Scherer S.E."/>
            <person name="Sodergren E."/>
            <person name="Matthews B.B."/>
            <person name="Crosby M.A."/>
            <person name="Schroeder A.J."/>
            <person name="Ortiz-Barrientos D."/>
            <person name="Rives C.M."/>
            <person name="Metzker M.L."/>
            <person name="Muzny D.M."/>
            <person name="Scott G."/>
            <person name="Steffen D."/>
            <person name="Wheeler D.A."/>
            <person name="Worley K.C."/>
            <person name="Havlak P."/>
            <person name="Durbin K.J."/>
            <person name="Egan A."/>
            <person name="Gill R."/>
            <person name="Hume J."/>
            <person name="Morgan M.B."/>
            <person name="Miner G."/>
            <person name="Hamilton C."/>
            <person name="Huang Y."/>
            <person name="Waldron L."/>
            <person name="Verduzco D."/>
            <person name="Clerc-Blankenburg K.P."/>
            <person name="Dubchak I."/>
            <person name="Noor M.A.F."/>
            <person name="Anderson W."/>
            <person name="White K.P."/>
            <person name="Clark A.G."/>
            <person name="Schaeffer S.W."/>
            <person name="Gelbart W.M."/>
            <person name="Weinstock G.M."/>
            <person name="Gibbs R.A."/>
        </authorList>
    </citation>
    <scope>NUCLEOTIDE SEQUENCE [LARGE SCALE GENOMIC DNA]</scope>
    <source>
        <strain>MV2-25 / Tucson 14011-0121.94</strain>
    </source>
</reference>
<sequence length="951" mass="107827">MADSDDEYDRKRRDKFRGERESYRTERRDERRPIGGAGGGRDEWSERNPFRGGGAGGGGAPRHRPDYSDYRGPGPRARYGSPVRDMPPPKRMRSDWGDGDGRPGPRYGGYDPYLMQAWTDHYQSMHSAYHHASHPPPVRELPIIGGDTLTQPAMLNLKQFLDTQDENISDSEVMRKYTEYKTDFKRQQLNEFFVAHKDEEWFKNKYHPEDSVNRSEEQRGFLRRRTDVFVELLENGTIGSVKVDSSHGDALIRVLDTCVIKLEGGTDEDLKVLDEKPKEALVFDRKPESVDPTTVVENTPKSPKKEKEEDELPLIVSPQRIALKPVNSDDENWDDAEVEDAPPKKPEEEEPKESEPIPEIKQKQKKEKKKKIKKRKRNSSSDEESSSSESESSSSSSEEEEEDDEKLKAKYDVEDGLRAEQKAEAEKDQAEAAKAKLGSVSPKEEISPEKSAADPEVEGEAKEDGKQAEKSPKCDDEKKQENGDAAKVESAAEPATGDAQGEVKPVTIDLDKVNPPRAMHRTSSIFLRNLAPSITKAEIEALCSRFSGYLRTAIADPLVERRWYRRGWITFTRDVNIKEICWSLNNQRLRDCEMGAIVNRDLSRRVRPANGITAHKQVVRSDIKLCARIVMNLDEKFKLWSEGPLSKPSPASDSEATAANGSGSSYGFNSKNPVLQNITDYLIEEASAEEEELLGLSGDRKDGEGEPIERDEQLLSVLDRLVLYLRIVHSVDYYNHCEYPYEDEMPNRCGIIHARGPAPSRVTSNELNEYIKSYEGKLLQFLTKTALLSEDQIKDLGAKNADTEVEKFVQANTQELAKDKWLCPLSGKKFKGPEFIRKHIFNKHEEKVDEVRKEVQYFNNYLRDPKRPQLPEHPGSVKRPETESVRGPGGYRPPMYTPMSGMPYSFGGHMMGGGRGGRHFPPARRELPLEHHRRLVGYHDLDAPSNSDIFD</sequence>
<dbReference type="EMBL" id="CM000071">
    <property type="protein sequence ID" value="EAL26609.2"/>
    <property type="molecule type" value="Genomic_DNA"/>
</dbReference>
<dbReference type="RefSeq" id="XP_001362029.2">
    <property type="nucleotide sequence ID" value="XM_001361992.4"/>
</dbReference>
<dbReference type="RefSeq" id="XP_015040780.1">
    <property type="nucleotide sequence ID" value="XM_015185294.1"/>
</dbReference>
<dbReference type="SMR" id="Q28WQ8"/>
<dbReference type="FunCoup" id="Q28WQ8">
    <property type="interactions" value="2514"/>
</dbReference>
<dbReference type="STRING" id="46245.Q28WQ8"/>
<dbReference type="EnsemblMetazoa" id="FBtr0280338">
    <property type="protein sequence ID" value="FBpp0278776"/>
    <property type="gene ID" value="FBgn0080620"/>
</dbReference>
<dbReference type="EnsemblMetazoa" id="FBtr0372149">
    <property type="protein sequence ID" value="FBpp0334198"/>
    <property type="gene ID" value="FBgn0080620"/>
</dbReference>
<dbReference type="GeneID" id="4805668"/>
<dbReference type="KEGG" id="dpo:4805668"/>
<dbReference type="CTD" id="35539"/>
<dbReference type="eggNOG" id="KOG2295">
    <property type="taxonomic scope" value="Eukaryota"/>
</dbReference>
<dbReference type="HOGENOM" id="CLU_008560_0_0_1"/>
<dbReference type="InParanoid" id="Q28WQ8"/>
<dbReference type="OMA" id="GARDEWS"/>
<dbReference type="Proteomes" id="UP000001819">
    <property type="component" value="Chromosome 3"/>
</dbReference>
<dbReference type="Bgee" id="FBgn0080620">
    <property type="expression patterns" value="Expressed in insect adult head and 2 other cell types or tissues"/>
</dbReference>
<dbReference type="ExpressionAtlas" id="Q28WQ8">
    <property type="expression patterns" value="baseline"/>
</dbReference>
<dbReference type="GO" id="GO:0016604">
    <property type="term" value="C:nuclear body"/>
    <property type="evidence" value="ECO:0007669"/>
    <property type="project" value="TreeGrafter"/>
</dbReference>
<dbReference type="GO" id="GO:0005654">
    <property type="term" value="C:nucleoplasm"/>
    <property type="evidence" value="ECO:0000250"/>
    <property type="project" value="UniProtKB"/>
</dbReference>
<dbReference type="GO" id="GO:0003676">
    <property type="term" value="F:nucleic acid binding"/>
    <property type="evidence" value="ECO:0007669"/>
    <property type="project" value="InterPro"/>
</dbReference>
<dbReference type="GO" id="GO:0031053">
    <property type="term" value="P:primary miRNA processing"/>
    <property type="evidence" value="ECO:0000250"/>
    <property type="project" value="UniProtKB"/>
</dbReference>
<dbReference type="GO" id="GO:0035194">
    <property type="term" value="P:regulatory ncRNA-mediated post-transcriptional gene silencing"/>
    <property type="evidence" value="ECO:0000250"/>
    <property type="project" value="UniProtKB"/>
</dbReference>
<dbReference type="InterPro" id="IPR035979">
    <property type="entry name" value="RBD_domain_sf"/>
</dbReference>
<dbReference type="InterPro" id="IPR039727">
    <property type="entry name" value="SE/Ars2"/>
</dbReference>
<dbReference type="InterPro" id="IPR007042">
    <property type="entry name" value="SERRATE/Ars2_C"/>
</dbReference>
<dbReference type="InterPro" id="IPR021933">
    <property type="entry name" value="SERRATE/Ars2_N"/>
</dbReference>
<dbReference type="PANTHER" id="PTHR13165">
    <property type="entry name" value="ARSENITE-RESISTANCE PROTEIN 2"/>
    <property type="match status" value="1"/>
</dbReference>
<dbReference type="PANTHER" id="PTHR13165:SF0">
    <property type="entry name" value="SERRATE RNA EFFECTOR MOLECULE HOMOLOG"/>
    <property type="match status" value="1"/>
</dbReference>
<dbReference type="Pfam" id="PF04959">
    <property type="entry name" value="ARS2"/>
    <property type="match status" value="1"/>
</dbReference>
<dbReference type="Pfam" id="PF12066">
    <property type="entry name" value="SERRATE_Ars2_N"/>
    <property type="match status" value="1"/>
</dbReference>
<dbReference type="SUPFAM" id="SSF54928">
    <property type="entry name" value="RNA-binding domain, RBD"/>
    <property type="match status" value="1"/>
</dbReference>
<evidence type="ECO:0000250" key="1"/>
<evidence type="ECO:0000256" key="2">
    <source>
        <dbReference type="SAM" id="MobiDB-lite"/>
    </source>
</evidence>
<evidence type="ECO:0000305" key="3"/>
<name>SRRT_DROPS</name>
<accession>Q28WQ8</accession>
<organism>
    <name type="scientific">Drosophila pseudoobscura pseudoobscura</name>
    <name type="common">Fruit fly</name>
    <dbReference type="NCBI Taxonomy" id="46245"/>
    <lineage>
        <taxon>Eukaryota</taxon>
        <taxon>Metazoa</taxon>
        <taxon>Ecdysozoa</taxon>
        <taxon>Arthropoda</taxon>
        <taxon>Hexapoda</taxon>
        <taxon>Insecta</taxon>
        <taxon>Pterygota</taxon>
        <taxon>Neoptera</taxon>
        <taxon>Endopterygota</taxon>
        <taxon>Diptera</taxon>
        <taxon>Brachycera</taxon>
        <taxon>Muscomorpha</taxon>
        <taxon>Ephydroidea</taxon>
        <taxon>Drosophilidae</taxon>
        <taxon>Drosophila</taxon>
        <taxon>Sophophora</taxon>
    </lineage>
</organism>
<protein>
    <recommendedName>
        <fullName>Serrate RNA effector molecule homolog</fullName>
    </recommendedName>
    <alternativeName>
        <fullName>Arsenite-resistance protein 2 homolog</fullName>
    </alternativeName>
</protein>